<dbReference type="EC" id="2.3.1.189" evidence="1"/>
<dbReference type="EMBL" id="CP001867">
    <property type="protein sequence ID" value="ADB77195.1"/>
    <property type="molecule type" value="Genomic_DNA"/>
</dbReference>
<dbReference type="RefSeq" id="WP_012950619.1">
    <property type="nucleotide sequence ID" value="NC_013757.1"/>
</dbReference>
<dbReference type="SMR" id="D2S4P5"/>
<dbReference type="STRING" id="526225.Gobs_4647"/>
<dbReference type="KEGG" id="gob:Gobs_4647"/>
<dbReference type="eggNOG" id="COG0456">
    <property type="taxonomic scope" value="Bacteria"/>
</dbReference>
<dbReference type="HOGENOM" id="CLU_068014_0_0_11"/>
<dbReference type="OrthoDB" id="3208058at2"/>
<dbReference type="Proteomes" id="UP000001382">
    <property type="component" value="Chromosome"/>
</dbReference>
<dbReference type="GO" id="GO:0035447">
    <property type="term" value="F:mycothiol synthase activity"/>
    <property type="evidence" value="ECO:0007669"/>
    <property type="project" value="UniProtKB-UniRule"/>
</dbReference>
<dbReference type="GO" id="GO:0010125">
    <property type="term" value="P:mycothiol biosynthetic process"/>
    <property type="evidence" value="ECO:0007669"/>
    <property type="project" value="UniProtKB-UniRule"/>
</dbReference>
<dbReference type="CDD" id="cd04301">
    <property type="entry name" value="NAT_SF"/>
    <property type="match status" value="2"/>
</dbReference>
<dbReference type="Gene3D" id="3.40.630.30">
    <property type="match status" value="1"/>
</dbReference>
<dbReference type="HAMAP" id="MF_01698">
    <property type="entry name" value="MshD"/>
    <property type="match status" value="1"/>
</dbReference>
<dbReference type="InterPro" id="IPR016181">
    <property type="entry name" value="Acyl_CoA_acyltransferase"/>
</dbReference>
<dbReference type="InterPro" id="IPR050832">
    <property type="entry name" value="Bact_Acetyltransf"/>
</dbReference>
<dbReference type="InterPro" id="IPR000182">
    <property type="entry name" value="GNAT_dom"/>
</dbReference>
<dbReference type="InterPro" id="IPR017813">
    <property type="entry name" value="Mycothiol_AcTrfase"/>
</dbReference>
<dbReference type="NCBIfam" id="TIGR03448">
    <property type="entry name" value="mycothiol_MshD"/>
    <property type="match status" value="1"/>
</dbReference>
<dbReference type="PANTHER" id="PTHR43877">
    <property type="entry name" value="AMINOALKYLPHOSPHONATE N-ACETYLTRANSFERASE-RELATED-RELATED"/>
    <property type="match status" value="1"/>
</dbReference>
<dbReference type="Pfam" id="PF00583">
    <property type="entry name" value="Acetyltransf_1"/>
    <property type="match status" value="2"/>
</dbReference>
<dbReference type="PIRSF" id="PIRSF021524">
    <property type="entry name" value="MSH_acetyltransferase"/>
    <property type="match status" value="1"/>
</dbReference>
<dbReference type="SUPFAM" id="SSF55729">
    <property type="entry name" value="Acyl-CoA N-acyltransferases (Nat)"/>
    <property type="match status" value="1"/>
</dbReference>
<dbReference type="PROSITE" id="PS51186">
    <property type="entry name" value="GNAT"/>
    <property type="match status" value="2"/>
</dbReference>
<organism>
    <name type="scientific">Geodermatophilus obscurus (strain ATCC 25078 / DSM 43160 / JCM 3152 / CCUG 61914 / KCC A-0152 / KCTC 9177 / NBRC 13315 / NRRL B-3577 / G-20)</name>
    <dbReference type="NCBI Taxonomy" id="526225"/>
    <lineage>
        <taxon>Bacteria</taxon>
        <taxon>Bacillati</taxon>
        <taxon>Actinomycetota</taxon>
        <taxon>Actinomycetes</taxon>
        <taxon>Geodermatophilales</taxon>
        <taxon>Geodermatophilaceae</taxon>
        <taxon>Geodermatophilus</taxon>
    </lineage>
</organism>
<evidence type="ECO:0000255" key="1">
    <source>
        <dbReference type="HAMAP-Rule" id="MF_01698"/>
    </source>
</evidence>
<reference key="1">
    <citation type="submission" date="2010-01" db="EMBL/GenBank/DDBJ databases">
        <title>The complete genome of Geodermatophilus obscurus DSM 43160.</title>
        <authorList>
            <consortium name="US DOE Joint Genome Institute (JGI-PGF)"/>
            <person name="Lucas S."/>
            <person name="Copeland A."/>
            <person name="Lapidus A."/>
            <person name="Glavina del Rio T."/>
            <person name="Dalin E."/>
            <person name="Tice H."/>
            <person name="Bruce D."/>
            <person name="Goodwin L."/>
            <person name="Pitluck S."/>
            <person name="Kyrpides N."/>
            <person name="Mavromatis K."/>
            <person name="Ivanova N."/>
            <person name="Munk A.C."/>
            <person name="Brettin T."/>
            <person name="Detter J.C."/>
            <person name="Han C."/>
            <person name="Larimer F."/>
            <person name="Land M."/>
            <person name="Hauser L."/>
            <person name="Markowitz V."/>
            <person name="Cheng J.-F."/>
            <person name="Hugenholtz P."/>
            <person name="Woyke T."/>
            <person name="Wu D."/>
            <person name="Jando M."/>
            <person name="Schneider S."/>
            <person name="Klenk H.-P."/>
            <person name="Eisen J.A."/>
        </authorList>
    </citation>
    <scope>NUCLEOTIDE SEQUENCE [LARGE SCALE GENOMIC DNA]</scope>
    <source>
        <strain>ATCC 25078 / DSM 43160 / JCM 3152 / CCUG 61914 / KCC A-0152 / KCTC 9177 / NBRC 13315 / NRRL B-3577 / G-20</strain>
    </source>
</reference>
<comment type="function">
    <text evidence="1">Catalyzes the transfer of acetyl from acetyl-CoA to desacetylmycothiol (Cys-GlcN-Ins) to form mycothiol.</text>
</comment>
<comment type="catalytic activity">
    <reaction evidence="1">
        <text>1D-myo-inositol 2-(L-cysteinylamino)-2-deoxy-alpha-D-glucopyranoside + acetyl-CoA = mycothiol + CoA + H(+)</text>
        <dbReference type="Rhea" id="RHEA:26172"/>
        <dbReference type="ChEBI" id="CHEBI:15378"/>
        <dbReference type="ChEBI" id="CHEBI:16768"/>
        <dbReference type="ChEBI" id="CHEBI:57287"/>
        <dbReference type="ChEBI" id="CHEBI:57288"/>
        <dbReference type="ChEBI" id="CHEBI:58887"/>
        <dbReference type="EC" id="2.3.1.189"/>
    </reaction>
</comment>
<comment type="subunit">
    <text evidence="1">Monomer.</text>
</comment>
<comment type="similarity">
    <text evidence="1">Belongs to the acetyltransferase family. MshD subfamily.</text>
</comment>
<sequence length="308" mass="33398">MSAAPLVRDVDRLDPAGVAAVLALLRAATAADGVRPLSEEAELRLQHGGPAGGRDVLATAADGALTGYARFEGGEGTGDAEAELVVAPGSRRRGVGRALLTRLEELAGDRPLRVWAHGDLPGSAELAQRHGYERARVLLQMRRELAGVDPEPRLRLPEGVQVRTFRSGTDEQAWLRTNARAFASHPEQGSWTAEDLRLREAEPWFDPAGFFLAWDGDRLLGSHWTKVHPPGDEGPEAVGEVYVLGIDPDAQGLGLGRALTDVGLAHLRRLGLRQVLLYVEEDNTAAVTLYERSGFTRHAVDVSWRRAR</sequence>
<gene>
    <name evidence="1" type="primary">mshD</name>
    <name type="ordered locus">Gobs_4647</name>
</gene>
<proteinExistence type="inferred from homology"/>
<accession>D2S4P5</accession>
<keyword id="KW-0012">Acyltransferase</keyword>
<keyword id="KW-1185">Reference proteome</keyword>
<keyword id="KW-0677">Repeat</keyword>
<keyword id="KW-0808">Transferase</keyword>
<name>MSHD_GEOOG</name>
<protein>
    <recommendedName>
        <fullName evidence="1">Mycothiol acetyltransferase</fullName>
        <shortName evidence="1">MSH acetyltransferase</shortName>
        <ecNumber evidence="1">2.3.1.189</ecNumber>
    </recommendedName>
    <alternativeName>
        <fullName evidence="1">Mycothiol synthase</fullName>
    </alternativeName>
</protein>
<feature type="chain" id="PRO_0000400258" description="Mycothiol acetyltransferase">
    <location>
        <begin position="1"/>
        <end position="308"/>
    </location>
</feature>
<feature type="domain" description="N-acetyltransferase 1" evidence="1">
    <location>
        <begin position="8"/>
        <end position="155"/>
    </location>
</feature>
<feature type="domain" description="N-acetyltransferase 2" evidence="1">
    <location>
        <begin position="160"/>
        <end position="308"/>
    </location>
</feature>
<feature type="binding site" evidence="1">
    <location>
        <position position="39"/>
    </location>
    <ligand>
        <name>1D-myo-inositol 2-(L-cysteinylamino)-2-deoxy-alpha-D-glucopyranoside</name>
        <dbReference type="ChEBI" id="CHEBI:58887"/>
    </ligand>
</feature>
<feature type="binding site" evidence="1">
    <location>
        <begin position="84"/>
        <end position="86"/>
    </location>
    <ligand>
        <name>acetyl-CoA</name>
        <dbReference type="ChEBI" id="CHEBI:57288"/>
        <label>1</label>
    </ligand>
</feature>
<feature type="binding site" evidence="1">
    <location>
        <position position="187"/>
    </location>
    <ligand>
        <name>1D-myo-inositol 2-(L-cysteinylamino)-2-deoxy-alpha-D-glucopyranoside</name>
        <dbReference type="ChEBI" id="CHEBI:58887"/>
    </ligand>
</feature>
<feature type="binding site" evidence="1">
    <location>
        <position position="226"/>
    </location>
    <ligand>
        <name>1D-myo-inositol 2-(L-cysteinylamino)-2-deoxy-alpha-D-glucopyranoside</name>
        <dbReference type="ChEBI" id="CHEBI:58887"/>
    </ligand>
</feature>
<feature type="binding site" evidence="1">
    <location>
        <position position="240"/>
    </location>
    <ligand>
        <name>1D-myo-inositol 2-(L-cysteinylamino)-2-deoxy-alpha-D-glucopyranoside</name>
        <dbReference type="ChEBI" id="CHEBI:58887"/>
    </ligand>
</feature>
<feature type="binding site" evidence="1">
    <location>
        <begin position="244"/>
        <end position="246"/>
    </location>
    <ligand>
        <name>acetyl-CoA</name>
        <dbReference type="ChEBI" id="CHEBI:57288"/>
        <label>2</label>
    </ligand>
</feature>
<feature type="binding site" evidence="1">
    <location>
        <begin position="251"/>
        <end position="257"/>
    </location>
    <ligand>
        <name>acetyl-CoA</name>
        <dbReference type="ChEBI" id="CHEBI:57288"/>
        <label>2</label>
    </ligand>
</feature>
<feature type="binding site" evidence="1">
    <location>
        <position position="278"/>
    </location>
    <ligand>
        <name>1D-myo-inositol 2-(L-cysteinylamino)-2-deoxy-alpha-D-glucopyranoside</name>
        <dbReference type="ChEBI" id="CHEBI:58887"/>
    </ligand>
</feature>